<name>Y1535_LISMO</name>
<keyword id="KW-0963">Cytoplasm</keyword>
<keyword id="KW-0238">DNA-binding</keyword>
<keyword id="KW-1185">Reference proteome</keyword>
<keyword id="KW-0804">Transcription</keyword>
<keyword id="KW-0805">Transcription regulation</keyword>
<sequence>MSGHSKWNNIQGRKNAQDSKRSKVFQKLAREIFVAAKKGPDPSLNPSLRLVMDKAKAVNMPNDNIKRAIDKASGNTSGENYDEVTYEGYAPGGIAVLVHALTDNKNRTSTNVRVAFNKNGGSLGETGSVSYMFDRKGYLVILREGLTVDEEEFMLEAIEAGADDVEVSEDVFEIFTDPATFSEVKEALQEAGYTFATAELSMFPTVYNEIAENNQTQFDKMLEALEDDDDVQEVYTNAEIN</sequence>
<dbReference type="EMBL" id="AL591979">
    <property type="protein sequence ID" value="CAC99613.1"/>
    <property type="molecule type" value="Genomic_DNA"/>
</dbReference>
<dbReference type="PIR" id="AG1266">
    <property type="entry name" value="AG1266"/>
</dbReference>
<dbReference type="RefSeq" id="NP_465060.1">
    <property type="nucleotide sequence ID" value="NC_003210.1"/>
</dbReference>
<dbReference type="RefSeq" id="WP_003732586.1">
    <property type="nucleotide sequence ID" value="NZ_CP149495.1"/>
</dbReference>
<dbReference type="SMR" id="Q8Y6Z5"/>
<dbReference type="STRING" id="169963.gene:17594192"/>
<dbReference type="PaxDb" id="169963-lmo1535"/>
<dbReference type="EnsemblBacteria" id="CAC99613">
    <property type="protein sequence ID" value="CAC99613"/>
    <property type="gene ID" value="CAC99613"/>
</dbReference>
<dbReference type="GeneID" id="987810"/>
<dbReference type="KEGG" id="lmo:lmo1535"/>
<dbReference type="PATRIC" id="fig|169963.11.peg.1576"/>
<dbReference type="eggNOG" id="COG0217">
    <property type="taxonomic scope" value="Bacteria"/>
</dbReference>
<dbReference type="HOGENOM" id="CLU_062974_2_2_9"/>
<dbReference type="OrthoDB" id="9781053at2"/>
<dbReference type="PhylomeDB" id="Q8Y6Z5"/>
<dbReference type="BioCyc" id="LMON169963:LMO1535-MONOMER"/>
<dbReference type="Proteomes" id="UP000000817">
    <property type="component" value="Chromosome"/>
</dbReference>
<dbReference type="GO" id="GO:0005829">
    <property type="term" value="C:cytosol"/>
    <property type="evidence" value="ECO:0000318"/>
    <property type="project" value="GO_Central"/>
</dbReference>
<dbReference type="GO" id="GO:0003677">
    <property type="term" value="F:DNA binding"/>
    <property type="evidence" value="ECO:0007669"/>
    <property type="project" value="UniProtKB-UniRule"/>
</dbReference>
<dbReference type="GO" id="GO:0006355">
    <property type="term" value="P:regulation of DNA-templated transcription"/>
    <property type="evidence" value="ECO:0007669"/>
    <property type="project" value="UniProtKB-UniRule"/>
</dbReference>
<dbReference type="FunFam" id="1.10.10.200:FF:000002">
    <property type="entry name" value="Probable transcriptional regulatory protein CLM62_37755"/>
    <property type="match status" value="1"/>
</dbReference>
<dbReference type="FunFam" id="3.30.70.980:FF:000002">
    <property type="entry name" value="Probable transcriptional regulatory protein YebC"/>
    <property type="match status" value="1"/>
</dbReference>
<dbReference type="Gene3D" id="1.10.10.200">
    <property type="match status" value="1"/>
</dbReference>
<dbReference type="Gene3D" id="3.30.70.980">
    <property type="match status" value="2"/>
</dbReference>
<dbReference type="HAMAP" id="MF_00693">
    <property type="entry name" value="Transcrip_reg_TACO1"/>
    <property type="match status" value="1"/>
</dbReference>
<dbReference type="InterPro" id="IPR017856">
    <property type="entry name" value="Integrase-like_N"/>
</dbReference>
<dbReference type="InterPro" id="IPR048300">
    <property type="entry name" value="TACO1_YebC-like_2nd/3rd_dom"/>
</dbReference>
<dbReference type="InterPro" id="IPR049083">
    <property type="entry name" value="TACO1_YebC_N"/>
</dbReference>
<dbReference type="InterPro" id="IPR002876">
    <property type="entry name" value="Transcrip_reg_TACO1-like"/>
</dbReference>
<dbReference type="InterPro" id="IPR026564">
    <property type="entry name" value="Transcrip_reg_TACO1-like_dom3"/>
</dbReference>
<dbReference type="InterPro" id="IPR029072">
    <property type="entry name" value="YebC-like"/>
</dbReference>
<dbReference type="NCBIfam" id="NF001030">
    <property type="entry name" value="PRK00110.1"/>
    <property type="match status" value="1"/>
</dbReference>
<dbReference type="NCBIfam" id="NF009044">
    <property type="entry name" value="PRK12378.1"/>
    <property type="match status" value="1"/>
</dbReference>
<dbReference type="NCBIfam" id="TIGR01033">
    <property type="entry name" value="YebC/PmpR family DNA-binding transcriptional regulator"/>
    <property type="match status" value="1"/>
</dbReference>
<dbReference type="PANTHER" id="PTHR12532:SF6">
    <property type="entry name" value="TRANSCRIPTIONAL REGULATORY PROTEIN YEBC-RELATED"/>
    <property type="match status" value="1"/>
</dbReference>
<dbReference type="PANTHER" id="PTHR12532">
    <property type="entry name" value="TRANSLATIONAL ACTIVATOR OF CYTOCHROME C OXIDASE 1"/>
    <property type="match status" value="1"/>
</dbReference>
<dbReference type="Pfam" id="PF20772">
    <property type="entry name" value="TACO1_YebC_N"/>
    <property type="match status" value="1"/>
</dbReference>
<dbReference type="Pfam" id="PF01709">
    <property type="entry name" value="Transcrip_reg"/>
    <property type="match status" value="1"/>
</dbReference>
<dbReference type="SUPFAM" id="SSF75625">
    <property type="entry name" value="YebC-like"/>
    <property type="match status" value="1"/>
</dbReference>
<reference key="1">
    <citation type="journal article" date="2001" name="Science">
        <title>Comparative genomics of Listeria species.</title>
        <authorList>
            <person name="Glaser P."/>
            <person name="Frangeul L."/>
            <person name="Buchrieser C."/>
            <person name="Rusniok C."/>
            <person name="Amend A."/>
            <person name="Baquero F."/>
            <person name="Berche P."/>
            <person name="Bloecker H."/>
            <person name="Brandt P."/>
            <person name="Chakraborty T."/>
            <person name="Charbit A."/>
            <person name="Chetouani F."/>
            <person name="Couve E."/>
            <person name="de Daruvar A."/>
            <person name="Dehoux P."/>
            <person name="Domann E."/>
            <person name="Dominguez-Bernal G."/>
            <person name="Duchaud E."/>
            <person name="Durant L."/>
            <person name="Dussurget O."/>
            <person name="Entian K.-D."/>
            <person name="Fsihi H."/>
            <person name="Garcia-del Portillo F."/>
            <person name="Garrido P."/>
            <person name="Gautier L."/>
            <person name="Goebel W."/>
            <person name="Gomez-Lopez N."/>
            <person name="Hain T."/>
            <person name="Hauf J."/>
            <person name="Jackson D."/>
            <person name="Jones L.-M."/>
            <person name="Kaerst U."/>
            <person name="Kreft J."/>
            <person name="Kuhn M."/>
            <person name="Kunst F."/>
            <person name="Kurapkat G."/>
            <person name="Madueno E."/>
            <person name="Maitournam A."/>
            <person name="Mata Vicente J."/>
            <person name="Ng E."/>
            <person name="Nedjari H."/>
            <person name="Nordsiek G."/>
            <person name="Novella S."/>
            <person name="de Pablos B."/>
            <person name="Perez-Diaz J.-C."/>
            <person name="Purcell R."/>
            <person name="Remmel B."/>
            <person name="Rose M."/>
            <person name="Schlueter T."/>
            <person name="Simoes N."/>
            <person name="Tierrez A."/>
            <person name="Vazquez-Boland J.-A."/>
            <person name="Voss H."/>
            <person name="Wehland J."/>
            <person name="Cossart P."/>
        </authorList>
    </citation>
    <scope>NUCLEOTIDE SEQUENCE [LARGE SCALE GENOMIC DNA]</scope>
    <source>
        <strain>ATCC BAA-679 / EGD-e</strain>
    </source>
</reference>
<comment type="subcellular location">
    <subcellularLocation>
        <location evidence="1">Cytoplasm</location>
    </subcellularLocation>
</comment>
<comment type="similarity">
    <text evidence="1">Belongs to the TACO1 family.</text>
</comment>
<feature type="chain" id="PRO_0000175839" description="Probable transcriptional regulatory protein lmo1535">
    <location>
        <begin position="1"/>
        <end position="241"/>
    </location>
</feature>
<feature type="region of interest" description="Disordered" evidence="2">
    <location>
        <begin position="1"/>
        <end position="22"/>
    </location>
</feature>
<feature type="compositionally biased region" description="Polar residues" evidence="2">
    <location>
        <begin position="1"/>
        <end position="14"/>
    </location>
</feature>
<organism>
    <name type="scientific">Listeria monocytogenes serovar 1/2a (strain ATCC BAA-679 / EGD-e)</name>
    <dbReference type="NCBI Taxonomy" id="169963"/>
    <lineage>
        <taxon>Bacteria</taxon>
        <taxon>Bacillati</taxon>
        <taxon>Bacillota</taxon>
        <taxon>Bacilli</taxon>
        <taxon>Bacillales</taxon>
        <taxon>Listeriaceae</taxon>
        <taxon>Listeria</taxon>
    </lineage>
</organism>
<protein>
    <recommendedName>
        <fullName evidence="1">Probable transcriptional regulatory protein lmo1535</fullName>
    </recommendedName>
</protein>
<proteinExistence type="inferred from homology"/>
<accession>Q8Y6Z5</accession>
<gene>
    <name type="ordered locus">lmo1535</name>
</gene>
<evidence type="ECO:0000255" key="1">
    <source>
        <dbReference type="HAMAP-Rule" id="MF_00693"/>
    </source>
</evidence>
<evidence type="ECO:0000256" key="2">
    <source>
        <dbReference type="SAM" id="MobiDB-lite"/>
    </source>
</evidence>